<sequence length="455" mass="50150">MSFTIAIIGRPNVGKSTLFNRLVGQKLALVDDEPGVTRDRREGQARLGDLDFTVIDTAGLDEGPRGSLTARMQEQTEAAIAAADALMFVFDARAGLTPTDRSFADFARRADKPVVLVANKSEGRHGDAGALESYALGLGDPVGVSAEHDEGMSDLYDALRSVMPEPAEEVDEEEIVEPDMSRPIRVAIVGRPNAGKSTVINYLLSEERLLTSPEAGTTRDSISVELNWKGRDFRIFDTAGLRRRSRIEAKLEKLSVADTLRAVRFAEAVVLMMDAQNRFEEQDLRIADLIEREGRALVIAVNKWDLMKGGSARIASLRNDVDHWLPQIRGAPVVAISGLTGEGIDRLMIAIQTAYAVWNRRVATALLNRWFQQAVAASPPPAVSGRRLKLNYATQTKARPPSFVVFCSRADAVPESYLRYLVNSLRETFDLAGTPIRITLREKANPFAHKRKRKS</sequence>
<protein>
    <recommendedName>
        <fullName evidence="1">GTPase Der</fullName>
    </recommendedName>
    <alternativeName>
        <fullName evidence="1">GTP-binding protein EngA</fullName>
    </alternativeName>
</protein>
<accession>Q3SR12</accession>
<reference key="1">
    <citation type="journal article" date="2006" name="Appl. Environ. Microbiol.">
        <title>Genome sequence of the chemolithoautotrophic nitrite-oxidizing bacterium Nitrobacter winogradskyi Nb-255.</title>
        <authorList>
            <person name="Starkenburg S.R."/>
            <person name="Chain P.S.G."/>
            <person name="Sayavedra-Soto L.A."/>
            <person name="Hauser L."/>
            <person name="Land M.L."/>
            <person name="Larimer F.W."/>
            <person name="Malfatti S.A."/>
            <person name="Klotz M.G."/>
            <person name="Bottomley P.J."/>
            <person name="Arp D.J."/>
            <person name="Hickey W.J."/>
        </authorList>
    </citation>
    <scope>NUCLEOTIDE SEQUENCE [LARGE SCALE GENOMIC DNA]</scope>
    <source>
        <strain>ATCC 25391 / DSM 10237 / CIP 104748 / NCIMB 11846 / Nb-255</strain>
    </source>
</reference>
<evidence type="ECO:0000255" key="1">
    <source>
        <dbReference type="HAMAP-Rule" id="MF_00195"/>
    </source>
</evidence>
<dbReference type="EMBL" id="CP000115">
    <property type="protein sequence ID" value="ABA05279.1"/>
    <property type="molecule type" value="Genomic_DNA"/>
</dbReference>
<dbReference type="RefSeq" id="WP_011315265.1">
    <property type="nucleotide sequence ID" value="NC_007406.1"/>
</dbReference>
<dbReference type="SMR" id="Q3SR12"/>
<dbReference type="STRING" id="323098.Nwi_2020"/>
<dbReference type="KEGG" id="nwi:Nwi_2020"/>
<dbReference type="eggNOG" id="COG1160">
    <property type="taxonomic scope" value="Bacteria"/>
</dbReference>
<dbReference type="HOGENOM" id="CLU_016077_5_0_5"/>
<dbReference type="OrthoDB" id="9805918at2"/>
<dbReference type="Proteomes" id="UP000002531">
    <property type="component" value="Chromosome"/>
</dbReference>
<dbReference type="GO" id="GO:0005525">
    <property type="term" value="F:GTP binding"/>
    <property type="evidence" value="ECO:0007669"/>
    <property type="project" value="UniProtKB-UniRule"/>
</dbReference>
<dbReference type="GO" id="GO:0042254">
    <property type="term" value="P:ribosome biogenesis"/>
    <property type="evidence" value="ECO:0007669"/>
    <property type="project" value="UniProtKB-KW"/>
</dbReference>
<dbReference type="CDD" id="cd01894">
    <property type="entry name" value="EngA1"/>
    <property type="match status" value="1"/>
</dbReference>
<dbReference type="CDD" id="cd01895">
    <property type="entry name" value="EngA2"/>
    <property type="match status" value="1"/>
</dbReference>
<dbReference type="FunFam" id="3.30.300.20:FF:000004">
    <property type="entry name" value="GTPase Der"/>
    <property type="match status" value="1"/>
</dbReference>
<dbReference type="FunFam" id="3.40.50.300:FF:000040">
    <property type="entry name" value="GTPase Der"/>
    <property type="match status" value="1"/>
</dbReference>
<dbReference type="FunFam" id="3.40.50.300:FF:000057">
    <property type="entry name" value="GTPase Der"/>
    <property type="match status" value="1"/>
</dbReference>
<dbReference type="Gene3D" id="3.30.300.20">
    <property type="match status" value="1"/>
</dbReference>
<dbReference type="Gene3D" id="3.40.50.300">
    <property type="entry name" value="P-loop containing nucleotide triphosphate hydrolases"/>
    <property type="match status" value="2"/>
</dbReference>
<dbReference type="HAMAP" id="MF_00195">
    <property type="entry name" value="GTPase_Der"/>
    <property type="match status" value="1"/>
</dbReference>
<dbReference type="InterPro" id="IPR031166">
    <property type="entry name" value="G_ENGA"/>
</dbReference>
<dbReference type="InterPro" id="IPR006073">
    <property type="entry name" value="GTP-bd"/>
</dbReference>
<dbReference type="InterPro" id="IPR016484">
    <property type="entry name" value="GTPase_Der"/>
</dbReference>
<dbReference type="InterPro" id="IPR032859">
    <property type="entry name" value="KH_dom-like"/>
</dbReference>
<dbReference type="InterPro" id="IPR015946">
    <property type="entry name" value="KH_dom-like_a/b"/>
</dbReference>
<dbReference type="InterPro" id="IPR027417">
    <property type="entry name" value="P-loop_NTPase"/>
</dbReference>
<dbReference type="InterPro" id="IPR005225">
    <property type="entry name" value="Small_GTP-bd"/>
</dbReference>
<dbReference type="NCBIfam" id="TIGR03594">
    <property type="entry name" value="GTPase_EngA"/>
    <property type="match status" value="1"/>
</dbReference>
<dbReference type="NCBIfam" id="TIGR00231">
    <property type="entry name" value="small_GTP"/>
    <property type="match status" value="2"/>
</dbReference>
<dbReference type="PANTHER" id="PTHR43834">
    <property type="entry name" value="GTPASE DER"/>
    <property type="match status" value="1"/>
</dbReference>
<dbReference type="PANTHER" id="PTHR43834:SF6">
    <property type="entry name" value="GTPASE DER"/>
    <property type="match status" value="1"/>
</dbReference>
<dbReference type="Pfam" id="PF14714">
    <property type="entry name" value="KH_dom-like"/>
    <property type="match status" value="1"/>
</dbReference>
<dbReference type="Pfam" id="PF01926">
    <property type="entry name" value="MMR_HSR1"/>
    <property type="match status" value="2"/>
</dbReference>
<dbReference type="PIRSF" id="PIRSF006485">
    <property type="entry name" value="GTP-binding_EngA"/>
    <property type="match status" value="1"/>
</dbReference>
<dbReference type="PRINTS" id="PR00326">
    <property type="entry name" value="GTP1OBG"/>
</dbReference>
<dbReference type="SUPFAM" id="SSF52540">
    <property type="entry name" value="P-loop containing nucleoside triphosphate hydrolases"/>
    <property type="match status" value="2"/>
</dbReference>
<dbReference type="PROSITE" id="PS51712">
    <property type="entry name" value="G_ENGA"/>
    <property type="match status" value="2"/>
</dbReference>
<keyword id="KW-0342">GTP-binding</keyword>
<keyword id="KW-0547">Nucleotide-binding</keyword>
<keyword id="KW-1185">Reference proteome</keyword>
<keyword id="KW-0677">Repeat</keyword>
<keyword id="KW-0690">Ribosome biogenesis</keyword>
<organism>
    <name type="scientific">Nitrobacter winogradskyi (strain ATCC 25391 / DSM 10237 / CIP 104748 / NCIMB 11846 / Nb-255)</name>
    <dbReference type="NCBI Taxonomy" id="323098"/>
    <lineage>
        <taxon>Bacteria</taxon>
        <taxon>Pseudomonadati</taxon>
        <taxon>Pseudomonadota</taxon>
        <taxon>Alphaproteobacteria</taxon>
        <taxon>Hyphomicrobiales</taxon>
        <taxon>Nitrobacteraceae</taxon>
        <taxon>Nitrobacter</taxon>
    </lineage>
</organism>
<proteinExistence type="inferred from homology"/>
<gene>
    <name evidence="1" type="primary">der</name>
    <name type="synonym">engA</name>
    <name type="ordered locus">Nwi_2020</name>
</gene>
<feature type="chain" id="PRO_1000011681" description="GTPase Der">
    <location>
        <begin position="1"/>
        <end position="455"/>
    </location>
</feature>
<feature type="domain" description="EngA-type G 1">
    <location>
        <begin position="3"/>
        <end position="167"/>
    </location>
</feature>
<feature type="domain" description="EngA-type G 2">
    <location>
        <begin position="184"/>
        <end position="359"/>
    </location>
</feature>
<feature type="domain" description="KH-like" evidence="1">
    <location>
        <begin position="360"/>
        <end position="444"/>
    </location>
</feature>
<feature type="binding site" evidence="1">
    <location>
        <begin position="9"/>
        <end position="16"/>
    </location>
    <ligand>
        <name>GTP</name>
        <dbReference type="ChEBI" id="CHEBI:37565"/>
        <label>1</label>
    </ligand>
</feature>
<feature type="binding site" evidence="1">
    <location>
        <begin position="56"/>
        <end position="60"/>
    </location>
    <ligand>
        <name>GTP</name>
        <dbReference type="ChEBI" id="CHEBI:37565"/>
        <label>1</label>
    </ligand>
</feature>
<feature type="binding site" evidence="1">
    <location>
        <begin position="119"/>
        <end position="122"/>
    </location>
    <ligand>
        <name>GTP</name>
        <dbReference type="ChEBI" id="CHEBI:37565"/>
        <label>1</label>
    </ligand>
</feature>
<feature type="binding site" evidence="1">
    <location>
        <begin position="190"/>
        <end position="197"/>
    </location>
    <ligand>
        <name>GTP</name>
        <dbReference type="ChEBI" id="CHEBI:37565"/>
        <label>2</label>
    </ligand>
</feature>
<feature type="binding site" evidence="1">
    <location>
        <begin position="237"/>
        <end position="241"/>
    </location>
    <ligand>
        <name>GTP</name>
        <dbReference type="ChEBI" id="CHEBI:37565"/>
        <label>2</label>
    </ligand>
</feature>
<feature type="binding site" evidence="1">
    <location>
        <begin position="302"/>
        <end position="305"/>
    </location>
    <ligand>
        <name>GTP</name>
        <dbReference type="ChEBI" id="CHEBI:37565"/>
        <label>2</label>
    </ligand>
</feature>
<comment type="function">
    <text evidence="1">GTPase that plays an essential role in the late steps of ribosome biogenesis.</text>
</comment>
<comment type="subunit">
    <text evidence="1">Associates with the 50S ribosomal subunit.</text>
</comment>
<comment type="similarity">
    <text evidence="1">Belongs to the TRAFAC class TrmE-Era-EngA-EngB-Septin-like GTPase superfamily. EngA (Der) GTPase family.</text>
</comment>
<name>DER_NITWN</name>